<feature type="chain" id="PRO_0000295468" description="Protein transport protein SEC23">
    <location>
        <begin position="1"/>
        <end position="776"/>
    </location>
</feature>
<feature type="binding site" evidence="1">
    <location>
        <position position="64"/>
    </location>
    <ligand>
        <name>Zn(2+)</name>
        <dbReference type="ChEBI" id="CHEBI:29105"/>
    </ligand>
</feature>
<feature type="binding site" evidence="1">
    <location>
        <position position="68"/>
    </location>
    <ligand>
        <name>Zn(2+)</name>
        <dbReference type="ChEBI" id="CHEBI:29105"/>
    </ligand>
</feature>
<feature type="binding site" evidence="1">
    <location>
        <position position="87"/>
    </location>
    <ligand>
        <name>Zn(2+)</name>
        <dbReference type="ChEBI" id="CHEBI:29105"/>
    </ligand>
</feature>
<feature type="binding site" evidence="1">
    <location>
        <position position="90"/>
    </location>
    <ligand>
        <name>Zn(2+)</name>
        <dbReference type="ChEBI" id="CHEBI:29105"/>
    </ligand>
</feature>
<organism>
    <name type="scientific">Phaeosphaeria nodorum (strain SN15 / ATCC MYA-4574 / FGSC 10173)</name>
    <name type="common">Glume blotch fungus</name>
    <name type="synonym">Parastagonospora nodorum</name>
    <dbReference type="NCBI Taxonomy" id="321614"/>
    <lineage>
        <taxon>Eukaryota</taxon>
        <taxon>Fungi</taxon>
        <taxon>Dikarya</taxon>
        <taxon>Ascomycota</taxon>
        <taxon>Pezizomycotina</taxon>
        <taxon>Dothideomycetes</taxon>
        <taxon>Pleosporomycetidae</taxon>
        <taxon>Pleosporales</taxon>
        <taxon>Pleosporineae</taxon>
        <taxon>Phaeosphaeriaceae</taxon>
        <taxon>Parastagonospora</taxon>
    </lineage>
</organism>
<protein>
    <recommendedName>
        <fullName>Protein transport protein SEC23</fullName>
    </recommendedName>
</protein>
<reference key="1">
    <citation type="journal article" date="2007" name="Plant Cell">
        <title>Dothideomycete-plant interactions illuminated by genome sequencing and EST analysis of the wheat pathogen Stagonospora nodorum.</title>
        <authorList>
            <person name="Hane J.K."/>
            <person name="Lowe R.G.T."/>
            <person name="Solomon P.S."/>
            <person name="Tan K.-C."/>
            <person name="Schoch C.L."/>
            <person name="Spatafora J.W."/>
            <person name="Crous P.W."/>
            <person name="Kodira C.D."/>
            <person name="Birren B.W."/>
            <person name="Galagan J.E."/>
            <person name="Torriani S.F.F."/>
            <person name="McDonald B.A."/>
            <person name="Oliver R.P."/>
        </authorList>
    </citation>
    <scope>NUCLEOTIDE SEQUENCE [LARGE SCALE GENOMIC DNA]</scope>
    <source>
        <strain>SN15 / ATCC MYA-4574 / FGSC 10173</strain>
    </source>
</reference>
<comment type="function">
    <text evidence="1">Component of the coat protein complex II (COPII) which promotes the formation of transport vesicles from the endoplasmic reticulum (ER). The coat has two main functions, the physical deformation of the endoplasmic reticulum membrane into vesicles and the selection of cargo molecules (By similarity).</text>
</comment>
<comment type="subunit">
    <text evidence="1">The COPII coat is composed of at least 5 proteins: the SEC23/24 complex, the SEC13/31 complex, and the protein SAR1.</text>
</comment>
<comment type="subcellular location">
    <subcellularLocation>
        <location evidence="1">Cytoplasm</location>
    </subcellularLocation>
    <subcellularLocation>
        <location evidence="1">Cytoplasmic vesicle</location>
        <location evidence="1">COPII-coated vesicle membrane</location>
        <topology evidence="1">Peripheral membrane protein</topology>
        <orientation evidence="1">Cytoplasmic side</orientation>
    </subcellularLocation>
    <subcellularLocation>
        <location evidence="1">Endoplasmic reticulum membrane</location>
        <topology evidence="1">Peripheral membrane protein</topology>
        <orientation evidence="1">Cytoplasmic side</orientation>
    </subcellularLocation>
    <subcellularLocation>
        <location evidence="1">Golgi apparatus membrane</location>
        <topology evidence="1">Peripheral membrane protein</topology>
        <orientation evidence="1">Cytoplasmic side</orientation>
    </subcellularLocation>
</comment>
<comment type="similarity">
    <text evidence="2">Belongs to the SEC23/SEC24 family. SEC23 subfamily.</text>
</comment>
<comment type="sequence caution" evidence="2">
    <conflict type="erroneous gene model prediction">
        <sequence resource="EMBL-CDS" id="EAT87830"/>
    </conflict>
</comment>
<comment type="sequence caution" evidence="2">
    <conflict type="frameshift">
        <sequence resource="EMBL-CDS" id="EAT87830"/>
    </conflict>
</comment>
<accession>Q0US25</accession>
<keyword id="KW-0963">Cytoplasm</keyword>
<keyword id="KW-0968">Cytoplasmic vesicle</keyword>
<keyword id="KW-0256">Endoplasmic reticulum</keyword>
<keyword id="KW-0931">ER-Golgi transport</keyword>
<keyword id="KW-0333">Golgi apparatus</keyword>
<keyword id="KW-0472">Membrane</keyword>
<keyword id="KW-0479">Metal-binding</keyword>
<keyword id="KW-0653">Protein transport</keyword>
<keyword id="KW-0813">Transport</keyword>
<keyword id="KW-0862">Zinc</keyword>
<dbReference type="EMBL" id="CH445331">
    <property type="protein sequence ID" value="EAT87830.1"/>
    <property type="status" value="ALT_SEQ"/>
    <property type="molecule type" value="Genomic_DNA"/>
</dbReference>
<dbReference type="RefSeq" id="XP_001795844.1">
    <property type="nucleotide sequence ID" value="XM_001795792.1"/>
</dbReference>
<dbReference type="SMR" id="Q0US25"/>
<dbReference type="FunCoup" id="Q0US25">
    <property type="interactions" value="956"/>
</dbReference>
<dbReference type="STRING" id="321614.Q0US25"/>
<dbReference type="GeneID" id="5972719"/>
<dbReference type="KEGG" id="pno:SNOG_05439"/>
<dbReference type="VEuPathDB" id="FungiDB:JI435_054390"/>
<dbReference type="eggNOG" id="KOG1986">
    <property type="taxonomic scope" value="Eukaryota"/>
</dbReference>
<dbReference type="InParanoid" id="Q0US25"/>
<dbReference type="OrthoDB" id="10256289at2759"/>
<dbReference type="Proteomes" id="UP000001055">
    <property type="component" value="Unassembled WGS sequence"/>
</dbReference>
<dbReference type="GO" id="GO:0030127">
    <property type="term" value="C:COPII vesicle coat"/>
    <property type="evidence" value="ECO:0000318"/>
    <property type="project" value="GO_Central"/>
</dbReference>
<dbReference type="GO" id="GO:0070971">
    <property type="term" value="C:endoplasmic reticulum exit site"/>
    <property type="evidence" value="ECO:0000318"/>
    <property type="project" value="GO_Central"/>
</dbReference>
<dbReference type="GO" id="GO:0005789">
    <property type="term" value="C:endoplasmic reticulum membrane"/>
    <property type="evidence" value="ECO:0007669"/>
    <property type="project" value="UniProtKB-SubCell"/>
</dbReference>
<dbReference type="GO" id="GO:0000139">
    <property type="term" value="C:Golgi membrane"/>
    <property type="evidence" value="ECO:0007669"/>
    <property type="project" value="UniProtKB-SubCell"/>
</dbReference>
<dbReference type="GO" id="GO:0005096">
    <property type="term" value="F:GTPase activator activity"/>
    <property type="evidence" value="ECO:0000318"/>
    <property type="project" value="GO_Central"/>
</dbReference>
<dbReference type="GO" id="GO:0008270">
    <property type="term" value="F:zinc ion binding"/>
    <property type="evidence" value="ECO:0007669"/>
    <property type="project" value="InterPro"/>
</dbReference>
<dbReference type="GO" id="GO:0090110">
    <property type="term" value="P:COPII-coated vesicle cargo loading"/>
    <property type="evidence" value="ECO:0000318"/>
    <property type="project" value="GO_Central"/>
</dbReference>
<dbReference type="GO" id="GO:0006886">
    <property type="term" value="P:intracellular protein transport"/>
    <property type="evidence" value="ECO:0007669"/>
    <property type="project" value="InterPro"/>
</dbReference>
<dbReference type="CDD" id="cd01478">
    <property type="entry name" value="Sec23-like"/>
    <property type="match status" value="1"/>
</dbReference>
<dbReference type="CDD" id="cd11287">
    <property type="entry name" value="Sec23_C"/>
    <property type="match status" value="1"/>
</dbReference>
<dbReference type="FunFam" id="1.20.120.730:FF:000001">
    <property type="entry name" value="Protein transport protein SEC23"/>
    <property type="match status" value="1"/>
</dbReference>
<dbReference type="FunFam" id="2.30.30.380:FF:000001">
    <property type="entry name" value="Protein transport protein SEC23"/>
    <property type="match status" value="1"/>
</dbReference>
<dbReference type="FunFam" id="3.40.20.10:FF:000006">
    <property type="entry name" value="Protein transport protein SEC23"/>
    <property type="match status" value="1"/>
</dbReference>
<dbReference type="FunFam" id="3.40.50.410:FF:000008">
    <property type="entry name" value="Protein transport protein SEC23"/>
    <property type="match status" value="1"/>
</dbReference>
<dbReference type="Gene3D" id="2.60.40.1670">
    <property type="entry name" value="beta-sandwich domain of Sec23/24"/>
    <property type="match status" value="1"/>
</dbReference>
<dbReference type="Gene3D" id="1.20.120.730">
    <property type="entry name" value="Sec23/Sec24 helical domain"/>
    <property type="match status" value="1"/>
</dbReference>
<dbReference type="Gene3D" id="3.40.20.10">
    <property type="entry name" value="Severin"/>
    <property type="match status" value="1"/>
</dbReference>
<dbReference type="Gene3D" id="3.40.50.410">
    <property type="entry name" value="von Willebrand factor, type A domain"/>
    <property type="match status" value="1"/>
</dbReference>
<dbReference type="Gene3D" id="2.30.30.380">
    <property type="entry name" value="Zn-finger domain of Sec23/24"/>
    <property type="match status" value="1"/>
</dbReference>
<dbReference type="InterPro" id="IPR029006">
    <property type="entry name" value="ADF-H/Gelsolin-like_dom_sf"/>
</dbReference>
<dbReference type="InterPro" id="IPR007123">
    <property type="entry name" value="Gelsolin-like_dom"/>
</dbReference>
<dbReference type="InterPro" id="IPR036180">
    <property type="entry name" value="Gelsolin-like_dom_sf"/>
</dbReference>
<dbReference type="InterPro" id="IPR037364">
    <property type="entry name" value="Sec23"/>
</dbReference>
<dbReference type="InterPro" id="IPR006900">
    <property type="entry name" value="Sec23/24_helical_dom"/>
</dbReference>
<dbReference type="InterPro" id="IPR036175">
    <property type="entry name" value="Sec23/24_helical_dom_sf"/>
</dbReference>
<dbReference type="InterPro" id="IPR006896">
    <property type="entry name" value="Sec23/24_trunk_dom"/>
</dbReference>
<dbReference type="InterPro" id="IPR012990">
    <property type="entry name" value="Sec23_24_beta_S"/>
</dbReference>
<dbReference type="InterPro" id="IPR037550">
    <property type="entry name" value="Sec23_C"/>
</dbReference>
<dbReference type="InterPro" id="IPR036465">
    <property type="entry name" value="vWFA_dom_sf"/>
</dbReference>
<dbReference type="InterPro" id="IPR006895">
    <property type="entry name" value="Znf_Sec23_Sec24"/>
</dbReference>
<dbReference type="InterPro" id="IPR036174">
    <property type="entry name" value="Znf_Sec23_Sec24_sf"/>
</dbReference>
<dbReference type="PANTHER" id="PTHR11141">
    <property type="entry name" value="PROTEIN TRANSPORT PROTEIN SEC23"/>
    <property type="match status" value="1"/>
</dbReference>
<dbReference type="PANTHER" id="PTHR11141:SF0">
    <property type="entry name" value="PROTEIN TRANSPORT PROTEIN SEC23"/>
    <property type="match status" value="1"/>
</dbReference>
<dbReference type="Pfam" id="PF00626">
    <property type="entry name" value="Gelsolin"/>
    <property type="match status" value="1"/>
</dbReference>
<dbReference type="Pfam" id="PF08033">
    <property type="entry name" value="Sec23_BS"/>
    <property type="match status" value="1"/>
</dbReference>
<dbReference type="Pfam" id="PF04815">
    <property type="entry name" value="Sec23_helical"/>
    <property type="match status" value="1"/>
</dbReference>
<dbReference type="Pfam" id="PF04811">
    <property type="entry name" value="Sec23_trunk"/>
    <property type="match status" value="1"/>
</dbReference>
<dbReference type="Pfam" id="PF04810">
    <property type="entry name" value="zf-Sec23_Sec24"/>
    <property type="match status" value="1"/>
</dbReference>
<dbReference type="SUPFAM" id="SSF81995">
    <property type="entry name" value="beta-sandwich domain of Sec23/24"/>
    <property type="match status" value="1"/>
</dbReference>
<dbReference type="SUPFAM" id="SSF82754">
    <property type="entry name" value="C-terminal, gelsolin-like domain of Sec23/24"/>
    <property type="match status" value="1"/>
</dbReference>
<dbReference type="SUPFAM" id="SSF81811">
    <property type="entry name" value="Helical domain of Sec23/24"/>
    <property type="match status" value="1"/>
</dbReference>
<dbReference type="SUPFAM" id="SSF53300">
    <property type="entry name" value="vWA-like"/>
    <property type="match status" value="1"/>
</dbReference>
<dbReference type="SUPFAM" id="SSF82919">
    <property type="entry name" value="Zn-finger domain of Sec23/24"/>
    <property type="match status" value="1"/>
</dbReference>
<gene>
    <name type="primary">SEC23</name>
    <name type="ORF">SNOG_05439</name>
</gene>
<evidence type="ECO:0000250" key="1"/>
<evidence type="ECO:0000305" key="2"/>
<proteinExistence type="inferred from homology"/>
<name>SEC23_PHANO</name>
<sequence>MADFEAMKDTWSDVEDRDGVRLSWNTFPSSRMEASRLVVPIGALYTPLKEKTDTPLLQYEPVVCRAPCKGVLNPYCQVDMRARVWICPFCLNRNQLPPHYKDISQEQIPPELHPSSTTIEYRLPKPARCAPIFIFVIDTCQEEDSLKALKDSIIMSLSLLPAYALVGLITYGTMTQVHELGYTECAKSYVFRGNKDYSTKQVQTMIGLGQMAAPRPGMQAQPGQPGGAPPTAAMRFILPVGQCEFQLTNVLESLQRDPWPVANDKRALRCTGVALSVASGLLEASNFVNTGARIMLFAGGPATEGPGMVVGPELREPIRSHHDIDRDNIKYYKKALKFYETLAKRVSTNGHIVDIFAGCLDQVGLLEMRGLANTTGGHMILTDSFTSSMYKQSFARVFNKDADDNLLMGFNAEMEVLTTKELKVTGLIGHAVSLNKKSVNVGETECGIGNTCAWKMCGIDPEASYGIYFEIAGQGGPSGMTGGAPQAIMQFLTYYQHSSGQMHLRVTTVSRPMSGPSGDPALAQSFDQEAAAVLMSRIAVFKAEVDDGPDVLRWVDRMLIRLCSRFAEYRKDDPSSFRLEKNFTLYPQFMFHLRRSQFLQVFNNSPDETAFYRHVLNHEDVGNSLVMIQPTLDSYGFDHEGGQPVLLDSASIQSETVLLLDTFFHILIFHGETMAEWRKAGYQDQEGYENFRTLLEAPKEDAKDLIQDRFPLPRFIVCDAGGSQARFLLSKLNPSTTHQTSTYGGVAQTAQTIFTDDVSLQTFMDHLMKLAVSGTS</sequence>